<feature type="initiator methionine" description="Removed" evidence="1">
    <location>
        <position position="1"/>
    </location>
</feature>
<feature type="chain" id="PRO_0000108331" description="Cytochrome c">
    <location>
        <begin position="2"/>
        <end position="110"/>
    </location>
</feature>
<feature type="binding site" description="covalent" evidence="2">
    <location>
        <position position="21"/>
    </location>
    <ligand>
        <name>heme c</name>
        <dbReference type="ChEBI" id="CHEBI:61717"/>
    </ligand>
</feature>
<feature type="binding site" description="covalent" evidence="2">
    <location>
        <position position="24"/>
    </location>
    <ligand>
        <name>heme c</name>
        <dbReference type="ChEBI" id="CHEBI:61717"/>
    </ligand>
</feature>
<feature type="binding site" description="axial binding residue" evidence="2">
    <location>
        <position position="25"/>
    </location>
    <ligand>
        <name>heme c</name>
        <dbReference type="ChEBI" id="CHEBI:61717"/>
    </ligand>
    <ligandPart>
        <name>Fe</name>
        <dbReference type="ChEBI" id="CHEBI:18248"/>
    </ligandPart>
</feature>
<feature type="binding site" description="axial binding residue" evidence="2">
    <location>
        <position position="87"/>
    </location>
    <ligand>
        <name>heme c</name>
        <dbReference type="ChEBI" id="CHEBI:61717"/>
    </ligand>
    <ligandPart>
        <name>Fe</name>
        <dbReference type="ChEBI" id="CHEBI:18248"/>
    </ligandPart>
</feature>
<feature type="modified residue" description="N6,N6,N6-trimethyllysine" evidence="1">
    <location>
        <position position="79"/>
    </location>
</feature>
<sequence length="110" mass="12093">MPAPFEKGSEKKGATLFKTRCLQCHTVEEGGPHKVGPNLHGIMGRKSGQAVGYSYTDANKKKGVEWSEQTMSDYLENPKKYIPGTKMAFGGLKKPKDRNDLVTYLASATK</sequence>
<name>CYC_PICST</name>
<accession>O13393</accession>
<accession>A3LW60</accession>
<protein>
    <recommendedName>
        <fullName>Cytochrome c</fullName>
    </recommendedName>
</protein>
<keyword id="KW-0249">Electron transport</keyword>
<keyword id="KW-0349">Heme</keyword>
<keyword id="KW-0408">Iron</keyword>
<keyword id="KW-0479">Metal-binding</keyword>
<keyword id="KW-0488">Methylation</keyword>
<keyword id="KW-0496">Mitochondrion</keyword>
<keyword id="KW-1185">Reference proteome</keyword>
<keyword id="KW-0679">Respiratory chain</keyword>
<keyword id="KW-0813">Transport</keyword>
<proteinExistence type="inferred from homology"/>
<organism>
    <name type="scientific">Scheffersomyces stipitis (strain ATCC 58785 / CBS 6054 / NBRC 10063 / NRRL Y-11545)</name>
    <name type="common">Yeast</name>
    <name type="synonym">Pichia stipitis</name>
    <dbReference type="NCBI Taxonomy" id="322104"/>
    <lineage>
        <taxon>Eukaryota</taxon>
        <taxon>Fungi</taxon>
        <taxon>Dikarya</taxon>
        <taxon>Ascomycota</taxon>
        <taxon>Saccharomycotina</taxon>
        <taxon>Pichiomycetes</taxon>
        <taxon>Debaryomycetaceae</taxon>
        <taxon>Scheffersomyces</taxon>
    </lineage>
</organism>
<gene>
    <name type="primary">CYC1</name>
    <name type="ORF">PICST_78490</name>
</gene>
<comment type="function">
    <text>Electron carrier protein. The oxidized form of the cytochrome c heme group can accept an electron from the heme group of the cytochrome c1 subunit of cytochrome reductase. Cytochrome c then transfers this electron to the cytochrome oxidase complex, the final protein carrier in the mitochondrial electron-transport chain.</text>
</comment>
<comment type="subcellular location">
    <subcellularLocation>
        <location>Mitochondrion intermembrane space</location>
    </subcellularLocation>
    <text>Loosely associated with the inner membrane.</text>
</comment>
<comment type="PTM">
    <text>Binds 1 heme c group covalently per subunit.</text>
</comment>
<comment type="similarity">
    <text evidence="3">Belongs to the cytochrome c family.</text>
</comment>
<comment type="online information" name="Protein Spotlight">
    <link uri="https://www.proteinspotlight.org/back_issues/076"/>
    <text>Life shuttle - Issue 76 of November 2006</text>
</comment>
<dbReference type="EMBL" id="AF030426">
    <property type="protein sequence ID" value="AAB86817.3"/>
    <property type="molecule type" value="Genomic_DNA"/>
</dbReference>
<dbReference type="EMBL" id="CP000499">
    <property type="protein sequence ID" value="ABN66912.1"/>
    <property type="molecule type" value="Genomic_DNA"/>
</dbReference>
<dbReference type="RefSeq" id="XP_001384941.1">
    <property type="nucleotide sequence ID" value="XM_001384904.1"/>
</dbReference>
<dbReference type="SMR" id="O13393"/>
<dbReference type="FunCoup" id="O13393">
    <property type="interactions" value="590"/>
</dbReference>
<dbReference type="STRING" id="322104.O13393"/>
<dbReference type="GeneID" id="4839649"/>
<dbReference type="KEGG" id="pic:PICST_78490"/>
<dbReference type="eggNOG" id="KOG3453">
    <property type="taxonomic scope" value="Eukaryota"/>
</dbReference>
<dbReference type="HOGENOM" id="CLU_060944_3_0_1"/>
<dbReference type="InParanoid" id="O13393"/>
<dbReference type="OMA" id="KARCAQC"/>
<dbReference type="OrthoDB" id="449280at2759"/>
<dbReference type="Proteomes" id="UP000002258">
    <property type="component" value="Chromosome 5"/>
</dbReference>
<dbReference type="GO" id="GO:0005758">
    <property type="term" value="C:mitochondrial intermembrane space"/>
    <property type="evidence" value="ECO:0007669"/>
    <property type="project" value="UniProtKB-SubCell"/>
</dbReference>
<dbReference type="GO" id="GO:0009055">
    <property type="term" value="F:electron transfer activity"/>
    <property type="evidence" value="ECO:0007669"/>
    <property type="project" value="InterPro"/>
</dbReference>
<dbReference type="GO" id="GO:0020037">
    <property type="term" value="F:heme binding"/>
    <property type="evidence" value="ECO:0007669"/>
    <property type="project" value="InterPro"/>
</dbReference>
<dbReference type="GO" id="GO:0046872">
    <property type="term" value="F:metal ion binding"/>
    <property type="evidence" value="ECO:0007669"/>
    <property type="project" value="UniProtKB-KW"/>
</dbReference>
<dbReference type="FunFam" id="1.10.760.10:FF:000001">
    <property type="entry name" value="Cytochrome c iso-1"/>
    <property type="match status" value="1"/>
</dbReference>
<dbReference type="Gene3D" id="1.10.760.10">
    <property type="entry name" value="Cytochrome c-like domain"/>
    <property type="match status" value="1"/>
</dbReference>
<dbReference type="InterPro" id="IPR009056">
    <property type="entry name" value="Cyt_c-like_dom"/>
</dbReference>
<dbReference type="InterPro" id="IPR036909">
    <property type="entry name" value="Cyt_c-like_dom_sf"/>
</dbReference>
<dbReference type="InterPro" id="IPR002327">
    <property type="entry name" value="Cyt_c_1A/1B"/>
</dbReference>
<dbReference type="PANTHER" id="PTHR11961">
    <property type="entry name" value="CYTOCHROME C"/>
    <property type="match status" value="1"/>
</dbReference>
<dbReference type="Pfam" id="PF00034">
    <property type="entry name" value="Cytochrom_C"/>
    <property type="match status" value="1"/>
</dbReference>
<dbReference type="PRINTS" id="PR00604">
    <property type="entry name" value="CYTCHRMECIAB"/>
</dbReference>
<dbReference type="SUPFAM" id="SSF46626">
    <property type="entry name" value="Cytochrome c"/>
    <property type="match status" value="1"/>
</dbReference>
<dbReference type="PROSITE" id="PS51007">
    <property type="entry name" value="CYTC"/>
    <property type="match status" value="1"/>
</dbReference>
<evidence type="ECO:0000250" key="1"/>
<evidence type="ECO:0000255" key="2">
    <source>
        <dbReference type="PROSITE-ProRule" id="PRU00433"/>
    </source>
</evidence>
<evidence type="ECO:0000305" key="3"/>
<reference key="1">
    <citation type="journal article" date="1999" name="Yeast">
        <title>Disruption of the cytochrome c gene in xylose-utilizing yeast Pichia stipitis leads to higher ethanol production.</title>
        <authorList>
            <person name="Shi N.Q."/>
            <person name="Davis B."/>
            <person name="Sherman F."/>
            <person name="Cruz J."/>
            <person name="Jeffries T.W."/>
        </authorList>
    </citation>
    <scope>NUCLEOTIDE SEQUENCE [GENOMIC DNA]</scope>
    <source>
        <strain>ATCC 58785 / CBS 6054 / NBRC 10063 / NRRL Y-11545</strain>
    </source>
</reference>
<reference key="2">
    <citation type="journal article" date="2007" name="Nat. Biotechnol.">
        <title>Genome sequence of the lignocellulose-bioconverting and xylose-fermenting yeast Pichia stipitis.</title>
        <authorList>
            <person name="Jeffries T.W."/>
            <person name="Grigoriev I.V."/>
            <person name="Grimwood J."/>
            <person name="Laplaza J.M."/>
            <person name="Aerts A."/>
            <person name="Salamov A."/>
            <person name="Schmutz J."/>
            <person name="Lindquist E."/>
            <person name="Dehal P."/>
            <person name="Shapiro H."/>
            <person name="Jin Y.-S."/>
            <person name="Passoth V."/>
            <person name="Richardson P.M."/>
        </authorList>
    </citation>
    <scope>NUCLEOTIDE SEQUENCE [LARGE SCALE GENOMIC DNA]</scope>
    <source>
        <strain>ATCC 58785 / CBS 6054 / NBRC 10063 / NRRL Y-11545</strain>
    </source>
</reference>